<feature type="chain" id="PRO_0000270971" description="88 kDa protein">
    <location>
        <begin position="1"/>
        <end position="5" status="greater than"/>
    </location>
</feature>
<feature type="non-terminal residue" evidence="2">
    <location>
        <position position="5"/>
    </location>
</feature>
<comment type="miscellaneous">
    <text>Under acid-stress, this protein is expressed at a higher level in wild-type B.cereus than in the acid-sensitive mutant strain NB1.</text>
</comment>
<reference evidence="3" key="1">
    <citation type="journal article" date="2002" name="J. Appl. Microbiol.">
        <title>Acid stress in the food pathogen Bacillus cereus.</title>
        <authorList>
            <person name="Browne N."/>
            <person name="Dowds B.C.A."/>
        </authorList>
    </citation>
    <scope>PROTEIN SEQUENCE</scope>
    <source>
        <strain evidence="1">DSM 626 / NCIMB 11796 / T</strain>
    </source>
</reference>
<accession>P83073</accession>
<keyword id="KW-0903">Direct protein sequencing</keyword>
<sequence>MKDTE</sequence>
<evidence type="ECO:0000269" key="1">
    <source>
    </source>
</evidence>
<evidence type="ECO:0000303" key="2">
    <source>
    </source>
</evidence>
<evidence type="ECO:0000305" key="3"/>
<protein>
    <recommendedName>
        <fullName>88 kDa protein</fullName>
    </recommendedName>
</protein>
<organism>
    <name type="scientific">Bacillus cereus</name>
    <dbReference type="NCBI Taxonomy" id="1396"/>
    <lineage>
        <taxon>Bacteria</taxon>
        <taxon>Bacillati</taxon>
        <taxon>Bacillota</taxon>
        <taxon>Bacilli</taxon>
        <taxon>Bacillales</taxon>
        <taxon>Bacillaceae</taxon>
        <taxon>Bacillus</taxon>
        <taxon>Bacillus cereus group</taxon>
    </lineage>
</organism>
<proteinExistence type="evidence at protein level"/>
<name>88KD_BACCE</name>